<organism>
    <name type="scientific">Homo sapiens</name>
    <name type="common">Human</name>
    <dbReference type="NCBI Taxonomy" id="9606"/>
    <lineage>
        <taxon>Eukaryota</taxon>
        <taxon>Metazoa</taxon>
        <taxon>Chordata</taxon>
        <taxon>Craniata</taxon>
        <taxon>Vertebrata</taxon>
        <taxon>Euteleostomi</taxon>
        <taxon>Mammalia</taxon>
        <taxon>Eutheria</taxon>
        <taxon>Euarchontoglires</taxon>
        <taxon>Primates</taxon>
        <taxon>Haplorrhini</taxon>
        <taxon>Catarrhini</taxon>
        <taxon>Hominidae</taxon>
        <taxon>Homo</taxon>
    </lineage>
</organism>
<sequence>MACAAVMIPGLLRCSVGAIRIEAASLRLTLSTLRHLTLTSIMKSKRKTDHMERTASVLRREIVSAAKVCGAASESPSVKSLRLLVADQDFSFKAGQWVDFFIPGVSVVGGFSICSSPRLLEQERVIELAVKYTNHPPALWVHNTCTLDCEVAVRVGGEFFFDPQPADASRNLVLIAGGVGINPLLSILRHAADLLREQANKRNGYEIGTIKLFYSAKNTSELLFKKNILDLVNEFPEKIACSLHVTKQTTQINAELKPYITEGRITEKEIRDHISKETLFYICGPPPMTDFFSKQLENNHVPKEHICFEKWW</sequence>
<proteinExistence type="evidence at protein level"/>
<accession>Q96HP4</accession>
<accession>Q2HYC7</accession>
<accession>Q59FA4</accession>
<protein>
    <recommendedName>
        <fullName>Oxidoreductase NAD-binding domain-containing protein 1</fullName>
        <ecNumber>1.-.-.-</ecNumber>
    </recommendedName>
</protein>
<comment type="interaction">
    <interactant intactId="EBI-2862111">
        <id>Q96HP4</id>
    </interactant>
    <interactant intactId="EBI-12188723">
        <id>Q96L46</id>
        <label>CAPNS2</label>
    </interactant>
    <organismsDiffer>false</organismsDiffer>
    <experiments>3</experiments>
</comment>
<comment type="interaction">
    <interactant intactId="EBI-2862111">
        <id>Q96HP4</id>
    </interactant>
    <interactant intactId="EBI-3918971">
        <id>Q9Y680</id>
        <label>FKBP7</label>
    </interactant>
    <organismsDiffer>false</organismsDiffer>
    <experiments>3</experiments>
</comment>
<comment type="interaction">
    <interactant intactId="EBI-2862111">
        <id>Q96HP4</id>
    </interactant>
    <interactant intactId="EBI-5661036">
        <id>A1L4K1</id>
        <label>FSD2</label>
    </interactant>
    <organismsDiffer>false</organismsDiffer>
    <experiments>3</experiments>
</comment>
<comment type="interaction">
    <interactant intactId="EBI-2862111">
        <id>Q96HP4</id>
    </interactant>
    <interactant intactId="EBI-9091197">
        <id>Q8IY31-3</id>
        <label>IFT20</label>
    </interactant>
    <organismsDiffer>false</organismsDiffer>
    <experiments>3</experiments>
</comment>
<keyword id="KW-0520">NAD</keyword>
<keyword id="KW-0560">Oxidoreductase</keyword>
<keyword id="KW-1267">Proteomics identification</keyword>
<keyword id="KW-1185">Reference proteome</keyword>
<keyword id="KW-0732">Signal</keyword>
<evidence type="ECO:0000250" key="1"/>
<evidence type="ECO:0000255" key="2"/>
<evidence type="ECO:0000255" key="3">
    <source>
        <dbReference type="PROSITE-ProRule" id="PRU00716"/>
    </source>
</evidence>
<evidence type="ECO:0000269" key="4">
    <source ref="1"/>
</evidence>
<evidence type="ECO:0000269" key="5">
    <source ref="3"/>
</evidence>
<gene>
    <name type="primary">OXNAD1</name>
</gene>
<name>OXND1_HUMAN</name>
<reference key="1">
    <citation type="submission" date="2006-01" db="EMBL/GenBank/DDBJ databases">
        <title>Cloning and characterization of human oxidoreductase NAD-binding domain containing 1.</title>
        <authorList>
            <person name="Qiu R."/>
            <person name="Li J."/>
            <person name="Ji C."/>
            <person name="Xie Y."/>
            <person name="Mao Y."/>
        </authorList>
    </citation>
    <scope>NUCLEOTIDE SEQUENCE [MRNA]</scope>
    <scope>VARIANT ALA-64</scope>
</reference>
<reference key="2">
    <citation type="journal article" date="2004" name="Genome Res.">
        <title>The status, quality, and expansion of the NIH full-length cDNA project: the Mammalian Gene Collection (MGC).</title>
        <authorList>
            <consortium name="The MGC Project Team"/>
        </authorList>
    </citation>
    <scope>NUCLEOTIDE SEQUENCE [LARGE SCALE MRNA]</scope>
    <source>
        <tissue>Eye</tissue>
    </source>
</reference>
<reference key="3">
    <citation type="submission" date="2005-03" db="EMBL/GenBank/DDBJ databases">
        <authorList>
            <person name="Totoki Y."/>
            <person name="Toyoda A."/>
            <person name="Takeda T."/>
            <person name="Sakaki Y."/>
            <person name="Tanaka A."/>
            <person name="Yokoyama S."/>
            <person name="Ohara O."/>
            <person name="Nagase T."/>
            <person name="Kikuno R.F."/>
        </authorList>
    </citation>
    <scope>NUCLEOTIDE SEQUENCE [LARGE SCALE MRNA] OF 2-312</scope>
    <scope>VARIANT CYS-82</scope>
    <source>
        <tissue>Brain</tissue>
    </source>
</reference>
<reference key="4">
    <citation type="journal article" date="2011" name="BMC Syst. Biol.">
        <title>Initial characterization of the human central proteome.</title>
        <authorList>
            <person name="Burkard T.R."/>
            <person name="Planyavsky M."/>
            <person name="Kaupe I."/>
            <person name="Breitwieser F.P."/>
            <person name="Buerckstuemmer T."/>
            <person name="Bennett K.L."/>
            <person name="Superti-Furga G."/>
            <person name="Colinge J."/>
        </authorList>
    </citation>
    <scope>IDENTIFICATION BY MASS SPECTROMETRY [LARGE SCALE ANALYSIS]</scope>
</reference>
<reference key="5">
    <citation type="journal article" date="2015" name="Proteomics">
        <title>N-terminome analysis of the human mitochondrial proteome.</title>
        <authorList>
            <person name="Vaca Jacome A.S."/>
            <person name="Rabilloud T."/>
            <person name="Schaeffer-Reiss C."/>
            <person name="Rompais M."/>
            <person name="Ayoub D."/>
            <person name="Lane L."/>
            <person name="Bairoch A."/>
            <person name="Van Dorsselaer A."/>
            <person name="Carapito C."/>
        </authorList>
    </citation>
    <scope>IDENTIFICATION BY MASS SPECTROMETRY [LARGE SCALE ANALYSIS]</scope>
</reference>
<dbReference type="EC" id="1.-.-.-"/>
<dbReference type="EMBL" id="DQ364598">
    <property type="protein sequence ID" value="ABC95193.1"/>
    <property type="molecule type" value="mRNA"/>
</dbReference>
<dbReference type="EMBL" id="BC008322">
    <property type="protein sequence ID" value="AAH08322.1"/>
    <property type="molecule type" value="mRNA"/>
</dbReference>
<dbReference type="EMBL" id="AB209556">
    <property type="protein sequence ID" value="BAD92793.1"/>
    <property type="molecule type" value="mRNA"/>
</dbReference>
<dbReference type="CCDS" id="CCDS2630.1"/>
<dbReference type="RefSeq" id="NP_001339906.1">
    <property type="nucleotide sequence ID" value="NM_001352977.2"/>
</dbReference>
<dbReference type="RefSeq" id="NP_001339907.1">
    <property type="nucleotide sequence ID" value="NM_001352978.2"/>
</dbReference>
<dbReference type="RefSeq" id="NP_612390.1">
    <property type="nucleotide sequence ID" value="NM_138381.5"/>
</dbReference>
<dbReference type="RefSeq" id="XP_016862975.1">
    <property type="nucleotide sequence ID" value="XM_017007486.1"/>
</dbReference>
<dbReference type="RefSeq" id="XP_016862976.1">
    <property type="nucleotide sequence ID" value="XM_017007487.1"/>
</dbReference>
<dbReference type="RefSeq" id="XP_016862977.1">
    <property type="nucleotide sequence ID" value="XM_017007488.1"/>
</dbReference>
<dbReference type="RefSeq" id="XP_016862978.1">
    <property type="nucleotide sequence ID" value="XM_017007489.1"/>
</dbReference>
<dbReference type="RefSeq" id="XP_016862979.1">
    <property type="nucleotide sequence ID" value="XM_017007490.1"/>
</dbReference>
<dbReference type="RefSeq" id="XP_016862980.1">
    <property type="nucleotide sequence ID" value="XM_017007491.1"/>
</dbReference>
<dbReference type="RefSeq" id="XP_016862981.1">
    <property type="nucleotide sequence ID" value="XM_017007492.1"/>
</dbReference>
<dbReference type="SMR" id="Q96HP4"/>
<dbReference type="BioGRID" id="124910">
    <property type="interactions" value="28"/>
</dbReference>
<dbReference type="FunCoup" id="Q96HP4">
    <property type="interactions" value="160"/>
</dbReference>
<dbReference type="IntAct" id="Q96HP4">
    <property type="interactions" value="16"/>
</dbReference>
<dbReference type="STRING" id="9606.ENSP00000487136"/>
<dbReference type="GlyGen" id="Q96HP4">
    <property type="glycosylation" value="1 site, 1 N-linked glycan (1 site)"/>
</dbReference>
<dbReference type="iPTMnet" id="Q96HP4"/>
<dbReference type="PhosphoSitePlus" id="Q96HP4"/>
<dbReference type="BioMuta" id="OXNAD1"/>
<dbReference type="DMDM" id="74731959"/>
<dbReference type="jPOST" id="Q96HP4"/>
<dbReference type="MassIVE" id="Q96HP4"/>
<dbReference type="PaxDb" id="9606-ENSP00000285083"/>
<dbReference type="PeptideAtlas" id="Q96HP4"/>
<dbReference type="ProteomicsDB" id="76772"/>
<dbReference type="Pumba" id="Q96HP4"/>
<dbReference type="Antibodypedia" id="53314">
    <property type="antibodies" value="134 antibodies from 20 providers"/>
</dbReference>
<dbReference type="DNASU" id="92106"/>
<dbReference type="Ensembl" id="ENST00000285083.10">
    <property type="protein sequence ID" value="ENSP00000285083.5"/>
    <property type="gene ID" value="ENSG00000154814.14"/>
</dbReference>
<dbReference type="Ensembl" id="ENST00000605932.5">
    <property type="protein sequence ID" value="ENSP00000475547.1"/>
    <property type="gene ID" value="ENSG00000154814.14"/>
</dbReference>
<dbReference type="GeneID" id="92106"/>
<dbReference type="KEGG" id="hsa:92106"/>
<dbReference type="MANE-Select" id="ENST00000285083.10">
    <property type="protein sequence ID" value="ENSP00000285083.5"/>
    <property type="RefSeq nucleotide sequence ID" value="NM_138381.5"/>
    <property type="RefSeq protein sequence ID" value="NP_612390.1"/>
</dbReference>
<dbReference type="UCSC" id="uc003caw.4">
    <property type="organism name" value="human"/>
</dbReference>
<dbReference type="AGR" id="HGNC:25128"/>
<dbReference type="CTD" id="92106"/>
<dbReference type="DisGeNET" id="92106"/>
<dbReference type="GeneCards" id="OXNAD1"/>
<dbReference type="HGNC" id="HGNC:25128">
    <property type="gene designation" value="OXNAD1"/>
</dbReference>
<dbReference type="HPA" id="ENSG00000154814">
    <property type="expression patterns" value="Low tissue specificity"/>
</dbReference>
<dbReference type="MIM" id="620581">
    <property type="type" value="gene"/>
</dbReference>
<dbReference type="neXtProt" id="NX_Q96HP4"/>
<dbReference type="OpenTargets" id="ENSG00000154814"/>
<dbReference type="PharmGKB" id="PA142671213"/>
<dbReference type="VEuPathDB" id="HostDB:ENSG00000154814"/>
<dbReference type="eggNOG" id="KOG0534">
    <property type="taxonomic scope" value="Eukaryota"/>
</dbReference>
<dbReference type="GeneTree" id="ENSGT00390000004280"/>
<dbReference type="InParanoid" id="Q96HP4"/>
<dbReference type="OMA" id="WIDFFIP"/>
<dbReference type="OrthoDB" id="436496at2759"/>
<dbReference type="PAN-GO" id="Q96HP4">
    <property type="GO annotations" value="0 GO annotations based on evolutionary models"/>
</dbReference>
<dbReference type="PhylomeDB" id="Q96HP4"/>
<dbReference type="TreeFam" id="TF329774"/>
<dbReference type="PathwayCommons" id="Q96HP4"/>
<dbReference type="SignaLink" id="Q96HP4"/>
<dbReference type="BioGRID-ORCS" id="92106">
    <property type="hits" value="6 hits in 1152 CRISPR screens"/>
</dbReference>
<dbReference type="ChiTaRS" id="OXNAD1">
    <property type="organism name" value="human"/>
</dbReference>
<dbReference type="GenomeRNAi" id="92106"/>
<dbReference type="Pharos" id="Q96HP4">
    <property type="development level" value="Tdark"/>
</dbReference>
<dbReference type="PRO" id="PR:Q96HP4"/>
<dbReference type="Proteomes" id="UP000005640">
    <property type="component" value="Chromosome 3"/>
</dbReference>
<dbReference type="RNAct" id="Q96HP4">
    <property type="molecule type" value="protein"/>
</dbReference>
<dbReference type="Bgee" id="ENSG00000154814">
    <property type="expression patterns" value="Expressed in left ventricle myocardium and 158 other cell types or tissues"/>
</dbReference>
<dbReference type="ExpressionAtlas" id="Q96HP4">
    <property type="expression patterns" value="baseline and differential"/>
</dbReference>
<dbReference type="GO" id="GO:0005739">
    <property type="term" value="C:mitochondrion"/>
    <property type="evidence" value="ECO:0006056"/>
    <property type="project" value="FlyBase"/>
</dbReference>
<dbReference type="GO" id="GO:0016491">
    <property type="term" value="F:oxidoreductase activity"/>
    <property type="evidence" value="ECO:0007669"/>
    <property type="project" value="UniProtKB-KW"/>
</dbReference>
<dbReference type="CDD" id="cd00322">
    <property type="entry name" value="FNR_like"/>
    <property type="match status" value="1"/>
</dbReference>
<dbReference type="Gene3D" id="3.40.50.80">
    <property type="entry name" value="Nucleotide-binding domain of ferredoxin-NADP reductase (FNR) module"/>
    <property type="match status" value="1"/>
</dbReference>
<dbReference type="Gene3D" id="2.40.30.10">
    <property type="entry name" value="Translation factors"/>
    <property type="match status" value="1"/>
</dbReference>
<dbReference type="InterPro" id="IPR017927">
    <property type="entry name" value="FAD-bd_FR_type"/>
</dbReference>
<dbReference type="InterPro" id="IPR039261">
    <property type="entry name" value="FNR_nucleotide-bd"/>
</dbReference>
<dbReference type="InterPro" id="IPR052128">
    <property type="entry name" value="Oxidoreductase_NAD-binding"/>
</dbReference>
<dbReference type="InterPro" id="IPR001433">
    <property type="entry name" value="OxRdtase_FAD/NAD-bd"/>
</dbReference>
<dbReference type="InterPro" id="IPR017938">
    <property type="entry name" value="Riboflavin_synthase-like_b-brl"/>
</dbReference>
<dbReference type="PANTHER" id="PTHR46505">
    <property type="entry name" value="OXIDOREDUCTASE NAD-BINDING DOMAIN-CONTAINING PROTEIN 1"/>
    <property type="match status" value="1"/>
</dbReference>
<dbReference type="PANTHER" id="PTHR46505:SF1">
    <property type="entry name" value="OXIDOREDUCTASE NAD-BINDING DOMAIN-CONTAINING PROTEIN 1"/>
    <property type="match status" value="1"/>
</dbReference>
<dbReference type="Pfam" id="PF00175">
    <property type="entry name" value="NAD_binding_1"/>
    <property type="match status" value="1"/>
</dbReference>
<dbReference type="PRINTS" id="PR00410">
    <property type="entry name" value="PHEHYDRXLASE"/>
</dbReference>
<dbReference type="SUPFAM" id="SSF52343">
    <property type="entry name" value="Ferredoxin reductase-like, C-terminal NADP-linked domain"/>
    <property type="match status" value="1"/>
</dbReference>
<dbReference type="SUPFAM" id="SSF63380">
    <property type="entry name" value="Riboflavin synthase domain-like"/>
    <property type="match status" value="1"/>
</dbReference>
<dbReference type="PROSITE" id="PS51384">
    <property type="entry name" value="FAD_FR"/>
    <property type="match status" value="1"/>
</dbReference>
<feature type="signal peptide" evidence="2">
    <location>
        <begin position="1"/>
        <end position="17"/>
    </location>
</feature>
<feature type="chain" id="PRO_0000299571" description="Oxidoreductase NAD-binding domain-containing protein 1">
    <location>
        <begin position="18"/>
        <end position="312"/>
    </location>
</feature>
<feature type="domain" description="FAD-binding FR-type" evidence="3">
    <location>
        <begin position="50"/>
        <end position="186"/>
    </location>
</feature>
<feature type="binding site" evidence="1">
    <location>
        <begin position="178"/>
        <end position="183"/>
    </location>
    <ligand>
        <name>NAD(+)</name>
        <dbReference type="ChEBI" id="CHEBI:57540"/>
    </ligand>
</feature>
<feature type="sequence variant" id="VAR_034855" description="In dbSNP:rs17042066.">
    <original>R</original>
    <variation>Q</variation>
    <location>
        <position position="59"/>
    </location>
</feature>
<feature type="sequence variant" id="VAR_034856" description="In dbSNP:rs842274." evidence="4">
    <original>S</original>
    <variation>A</variation>
    <location>
        <position position="64"/>
    </location>
</feature>
<feature type="sequence variant" id="VAR_034857" description="In dbSNP:rs6777976." evidence="5">
    <original>R</original>
    <variation>C</variation>
    <location>
        <position position="82"/>
    </location>
</feature>